<accession>P04542</accession>
<keyword id="KW-0903">Direct protein sequencing</keyword>
<keyword id="KW-1015">Disulfide bond</keyword>
<keyword id="KW-0646">Protease inhibitor</keyword>
<keyword id="KW-1185">Reference proteome</keyword>
<keyword id="KW-0964">Secreted</keyword>
<keyword id="KW-0722">Serine protease inhibitor</keyword>
<protein>
    <recommendedName>
        <fullName evidence="1">Serine protease inhibitor Kazal-type 1</fullName>
    </recommendedName>
    <alternativeName>
        <fullName evidence="4">Pancreatic secretory trypsin inhibitor</fullName>
    </alternativeName>
</protein>
<organism>
    <name type="scientific">Canis lupus familiaris</name>
    <name type="common">Dog</name>
    <name type="synonym">Canis familiaris</name>
    <dbReference type="NCBI Taxonomy" id="9615"/>
    <lineage>
        <taxon>Eukaryota</taxon>
        <taxon>Metazoa</taxon>
        <taxon>Chordata</taxon>
        <taxon>Craniata</taxon>
        <taxon>Vertebrata</taxon>
        <taxon>Euteleostomi</taxon>
        <taxon>Mammalia</taxon>
        <taxon>Eutheria</taxon>
        <taxon>Laurasiatheria</taxon>
        <taxon>Carnivora</taxon>
        <taxon>Caniformia</taxon>
        <taxon>Canidae</taxon>
        <taxon>Canis</taxon>
    </lineage>
</organism>
<dbReference type="PIR" id="A01232">
    <property type="entry name" value="TIDGA"/>
</dbReference>
<dbReference type="SMR" id="P04542"/>
<dbReference type="FunCoup" id="P04542">
    <property type="interactions" value="14"/>
</dbReference>
<dbReference type="STRING" id="9615.ENSCAFP00000009934"/>
<dbReference type="PaxDb" id="9612-ENSCAFP00000009934"/>
<dbReference type="eggNOG" id="KOG3649">
    <property type="taxonomic scope" value="Eukaryota"/>
</dbReference>
<dbReference type="HOGENOM" id="CLU_169765_6_0_1"/>
<dbReference type="InParanoid" id="P04542"/>
<dbReference type="OMA" id="REAKCNN"/>
<dbReference type="OrthoDB" id="126772at2759"/>
<dbReference type="Proteomes" id="UP000002254">
    <property type="component" value="Unplaced"/>
</dbReference>
<dbReference type="Proteomes" id="UP000694429">
    <property type="component" value="Unplaced"/>
</dbReference>
<dbReference type="Proteomes" id="UP000694542">
    <property type="component" value="Unplaced"/>
</dbReference>
<dbReference type="Proteomes" id="UP000805418">
    <property type="component" value="Unplaced"/>
</dbReference>
<dbReference type="GO" id="GO:0005576">
    <property type="term" value="C:extracellular region"/>
    <property type="evidence" value="ECO:0007669"/>
    <property type="project" value="UniProtKB-SubCell"/>
</dbReference>
<dbReference type="GO" id="GO:0004867">
    <property type="term" value="F:serine-type endopeptidase inhibitor activity"/>
    <property type="evidence" value="ECO:0007669"/>
    <property type="project" value="UniProtKB-KW"/>
</dbReference>
<dbReference type="CDD" id="cd01327">
    <property type="entry name" value="KAZAL_PSTI"/>
    <property type="match status" value="1"/>
</dbReference>
<dbReference type="FunFam" id="3.30.60.30:FF:000031">
    <property type="entry name" value="Serine protease inhibitor Kazal-type 2"/>
    <property type="match status" value="1"/>
</dbReference>
<dbReference type="Gene3D" id="3.30.60.30">
    <property type="match status" value="1"/>
</dbReference>
<dbReference type="InterPro" id="IPR002350">
    <property type="entry name" value="Kazal_dom"/>
</dbReference>
<dbReference type="InterPro" id="IPR036058">
    <property type="entry name" value="Kazal_dom_sf"/>
</dbReference>
<dbReference type="InterPro" id="IPR001239">
    <property type="entry name" value="Prot_inh_Kazal-m"/>
</dbReference>
<dbReference type="PANTHER" id="PTHR21312">
    <property type="entry name" value="SERINE PROTEASE INHIBITOR"/>
    <property type="match status" value="1"/>
</dbReference>
<dbReference type="PANTHER" id="PTHR21312:SF27">
    <property type="entry name" value="SERINE PROTEASE INHIBITOR KAZAL-TYPE 1"/>
    <property type="match status" value="1"/>
</dbReference>
<dbReference type="Pfam" id="PF00050">
    <property type="entry name" value="Kazal_1"/>
    <property type="match status" value="1"/>
</dbReference>
<dbReference type="PRINTS" id="PR00290">
    <property type="entry name" value="KAZALINHBTR"/>
</dbReference>
<dbReference type="SMART" id="SM00280">
    <property type="entry name" value="KAZAL"/>
    <property type="match status" value="1"/>
</dbReference>
<dbReference type="SUPFAM" id="SSF100895">
    <property type="entry name" value="Kazal-type serine protease inhibitors"/>
    <property type="match status" value="1"/>
</dbReference>
<dbReference type="PROSITE" id="PS00282">
    <property type="entry name" value="KAZAL_1"/>
    <property type="match status" value="1"/>
</dbReference>
<dbReference type="PROSITE" id="PS51465">
    <property type="entry name" value="KAZAL_2"/>
    <property type="match status" value="1"/>
</dbReference>
<sequence length="57" mass="6319">NNMLQRQANCNLKVNGCNKIYNPICGSDGITYANECLLCLENKKRQTSILVEKSGPC</sequence>
<feature type="chain" id="PRO_0000073024" description="Serine protease inhibitor Kazal-type 1">
    <location>
        <begin position="1"/>
        <end position="57"/>
    </location>
</feature>
<feature type="domain" description="Kazal-like" evidence="2">
    <location>
        <begin position="4"/>
        <end position="57"/>
    </location>
</feature>
<feature type="site" description="Reactive bond for trypsin" evidence="1 2">
    <location>
        <begin position="19"/>
        <end position="20"/>
    </location>
</feature>
<feature type="site" description="Necessary for sperm binding" evidence="1">
    <location>
        <begin position="21"/>
        <end position="22"/>
    </location>
</feature>
<feature type="disulfide bond" evidence="2">
    <location>
        <begin position="10"/>
        <end position="39"/>
    </location>
</feature>
<feature type="disulfide bond" evidence="2">
    <location>
        <begin position="17"/>
        <end position="36"/>
    </location>
</feature>
<feature type="disulfide bond" evidence="2">
    <location>
        <begin position="25"/>
        <end position="57"/>
    </location>
</feature>
<proteinExistence type="evidence at protein level"/>
<evidence type="ECO:0000250" key="1">
    <source>
        <dbReference type="UniProtKB" id="P09036"/>
    </source>
</evidence>
<evidence type="ECO:0000255" key="2">
    <source>
        <dbReference type="PROSITE-ProRule" id="PRU00798"/>
    </source>
</evidence>
<evidence type="ECO:0000269" key="3">
    <source>
    </source>
</evidence>
<evidence type="ECO:0000303" key="4">
    <source>
    </source>
</evidence>
<reference key="1">
    <citation type="journal article" date="1985" name="FEBS Lett.">
        <title>Purification and complete amino acid sequence of canine pancreatic secretory trypsin inhibitor.</title>
        <authorList>
            <person name="Kikuchi N."/>
            <person name="Nagata K."/>
            <person name="Yoshida N."/>
            <person name="Tanaka T."/>
            <person name="Yamamoto M."/>
            <person name="Saitoh Y."/>
        </authorList>
    </citation>
    <scope>PROTEIN SEQUENCE</scope>
    <scope>FUNCTION</scope>
    <scope>SUBCELLULAR LOCATION</scope>
</reference>
<gene>
    <name type="primary">SPINK1</name>
    <name type="synonym">PSTI</name>
</gene>
<name>ISK1_CANLF</name>
<comment type="function">
    <text evidence="1 3">Serine protease inhibitor which exhibits anti-trypsin activity (PubMed:4054311). In the pancreas, protects against trypsin-catalyzed premature activation of zymogens (By similarity).</text>
</comment>
<comment type="function">
    <text evidence="1">In the male reproductive tract, binds to sperm heads where it modulates sperm capacitance by inhibiting calcium uptake and nitrogen oxide (NO) production.</text>
</comment>
<comment type="subcellular location">
    <subcellularLocation>
        <location evidence="3">Secreted</location>
    </subcellularLocation>
</comment>
<comment type="miscellaneous">
    <text>This protein is unusual, with respect to the other mammalian SPINK1 proteins, in having an extra N-terminal residue.</text>
</comment>